<keyword id="KW-0325">Glycoprotein</keyword>
<keyword id="KW-0328">Glycosyltransferase</keyword>
<keyword id="KW-0333">Golgi apparatus</keyword>
<keyword id="KW-0472">Membrane</keyword>
<keyword id="KW-1185">Reference proteome</keyword>
<keyword id="KW-0735">Signal-anchor</keyword>
<keyword id="KW-0808">Transferase</keyword>
<keyword id="KW-0812">Transmembrane</keyword>
<keyword id="KW-1133">Transmembrane helix</keyword>
<proteinExistence type="evidence at protein level"/>
<sequence>MLPVSNPSSPEHLLKKSRTPDSTTSIDRKNSFNSLHSVGNRSSYIAASRSHCTWLILSLLSLQLILFLTLRSIPFPHRHIPENFPSPAAVVTTTVTTTVISAASSNPPLSSSSSDERCDSGRVFVYDMPKIFNEVILQQCDNLNPWSSRCDALSNDGFGQEATSLSNVIPKDLVQSWFWTDQFVTEIIFHNRILNHRCRTLDPESATAFYIPFYAGLAVGQYLWSNYAAADRDRHCKMMTQWVKNQPYWNRSNGWDHFITMGRITWDFRRSKDEDWGSNCIYIPGMRNITRLLIERNSWDHFDVGVPYPTGFHPRSDSDVVNWQDFVRNRRRETLFCFAGAPRAGIVNDFRGLLLRHCEESRGKCRTVDCTVGKCSNGSSAILETFLGSDFCLQPRGDSFTRRSIFDCMLAGSIPVFFWRRSAYMQYQWFLPDKPDSYSVFIDRNEVTNGTTSIKEVLERYSKEDVRKMRERVIDLIPNLVYAKSPNGLETFKDAFDVAIDGVFRRFKEQEKWYKWR</sequence>
<evidence type="ECO:0000255" key="1"/>
<evidence type="ECO:0000255" key="2">
    <source>
        <dbReference type="PROSITE-ProRule" id="PRU00498"/>
    </source>
</evidence>
<evidence type="ECO:0000256" key="3">
    <source>
        <dbReference type="SAM" id="MobiDB-lite"/>
    </source>
</evidence>
<evidence type="ECO:0000269" key="4">
    <source>
    </source>
</evidence>
<evidence type="ECO:0000269" key="5">
    <source>
    </source>
</evidence>
<evidence type="ECO:0000269" key="6">
    <source>
    </source>
</evidence>
<evidence type="ECO:0000303" key="7">
    <source>
    </source>
</evidence>
<evidence type="ECO:0000303" key="8">
    <source>
    </source>
</evidence>
<evidence type="ECO:0000305" key="9"/>
<evidence type="ECO:0000305" key="10">
    <source>
    </source>
</evidence>
<evidence type="ECO:0000312" key="11">
    <source>
        <dbReference type="Araport" id="AT5G62220"/>
    </source>
</evidence>
<evidence type="ECO:0000312" key="12">
    <source>
        <dbReference type="EMBL" id="BAA97186.1"/>
    </source>
</evidence>
<protein>
    <recommendedName>
        <fullName evidence="9">Xyloglucan galactosyltransferase XLT2</fullName>
        <ecNumber evidence="9">2.4.1.-</ecNumber>
    </recommendedName>
    <alternativeName>
        <fullName evidence="7">Glycosyltransferase 18</fullName>
        <shortName evidence="7">AtGT18</shortName>
    </alternativeName>
    <alternativeName>
        <fullName evidence="8">Protein XYLOGLUCAN L-SIDE CHAIN GALACTOSYLTRANSFERASE POSITION 2</fullName>
    </alternativeName>
</protein>
<feature type="chain" id="PRO_0000435999" description="Xyloglucan galactosyltransferase XLT2">
    <location>
        <begin position="1"/>
        <end position="517"/>
    </location>
</feature>
<feature type="topological domain" description="Cytoplasmic" evidence="9">
    <location>
        <begin position="1"/>
        <end position="49"/>
    </location>
</feature>
<feature type="transmembrane region" description="Helical; Signal-anchor for type II membrane protein" evidence="1">
    <location>
        <begin position="50"/>
        <end position="70"/>
    </location>
</feature>
<feature type="topological domain" description="Lumenal" evidence="9">
    <location>
        <begin position="71"/>
        <end position="517"/>
    </location>
</feature>
<feature type="region of interest" description="Disordered" evidence="3">
    <location>
        <begin position="1"/>
        <end position="31"/>
    </location>
</feature>
<feature type="compositionally biased region" description="Polar residues" evidence="3">
    <location>
        <begin position="20"/>
        <end position="31"/>
    </location>
</feature>
<feature type="glycosylation site" description="N-linked (GlcNAc...) asparagine" evidence="2">
    <location>
        <position position="250"/>
    </location>
</feature>
<feature type="glycosylation site" description="N-linked (GlcNAc...) asparagine" evidence="2">
    <location>
        <position position="288"/>
    </location>
</feature>
<feature type="glycosylation site" description="N-linked (GlcNAc...) asparagine" evidence="2">
    <location>
        <position position="377"/>
    </location>
</feature>
<feature type="glycosylation site" description="N-linked (GlcNAc...) asparagine" evidence="2">
    <location>
        <position position="449"/>
    </location>
</feature>
<accession>F4K6F1</accession>
<accession>Q9LVB4</accession>
<dbReference type="EC" id="2.4.1.-" evidence="9"/>
<dbReference type="EMBL" id="KJ138630">
    <property type="protein sequence ID" value="AHL38570.1"/>
    <property type="molecule type" value="mRNA"/>
</dbReference>
<dbReference type="EMBL" id="AB019235">
    <property type="protein sequence ID" value="BAA97186.1"/>
    <property type="status" value="ALT_SEQ"/>
    <property type="molecule type" value="Genomic_DNA"/>
</dbReference>
<dbReference type="EMBL" id="CP002688">
    <property type="protein sequence ID" value="AED97582.1"/>
    <property type="molecule type" value="Genomic_DNA"/>
</dbReference>
<dbReference type="RefSeq" id="NP_201028.1">
    <property type="nucleotide sequence ID" value="NM_125616.2"/>
</dbReference>
<dbReference type="FunCoup" id="F4K6F1">
    <property type="interactions" value="16"/>
</dbReference>
<dbReference type="STRING" id="3702.F4K6F1"/>
<dbReference type="CAZy" id="GT47">
    <property type="family name" value="Glycosyltransferase Family 47"/>
</dbReference>
<dbReference type="GlyCosmos" id="F4K6F1">
    <property type="glycosylation" value="4 sites, No reported glycans"/>
</dbReference>
<dbReference type="GlyGen" id="F4K6F1">
    <property type="glycosylation" value="4 sites"/>
</dbReference>
<dbReference type="iPTMnet" id="F4K6F1"/>
<dbReference type="PaxDb" id="3702-AT5G62220.1"/>
<dbReference type="ProteomicsDB" id="230164"/>
<dbReference type="EnsemblPlants" id="AT5G62220.1">
    <property type="protein sequence ID" value="AT5G62220.1"/>
    <property type="gene ID" value="AT5G62220"/>
</dbReference>
<dbReference type="GeneID" id="836343"/>
<dbReference type="Gramene" id="AT5G62220.1">
    <property type="protein sequence ID" value="AT5G62220.1"/>
    <property type="gene ID" value="AT5G62220"/>
</dbReference>
<dbReference type="KEGG" id="ath:AT5G62220"/>
<dbReference type="Araport" id="AT5G62220"/>
<dbReference type="TAIR" id="AT5G62220">
    <property type="gene designation" value="GT18"/>
</dbReference>
<dbReference type="eggNOG" id="KOG1021">
    <property type="taxonomic scope" value="Eukaryota"/>
</dbReference>
<dbReference type="HOGENOM" id="CLU_012659_4_2_1"/>
<dbReference type="InParanoid" id="F4K6F1"/>
<dbReference type="OMA" id="ASLPNWY"/>
<dbReference type="PRO" id="PR:F4K6F1"/>
<dbReference type="Proteomes" id="UP000006548">
    <property type="component" value="Chromosome 5"/>
</dbReference>
<dbReference type="ExpressionAtlas" id="F4K6F1">
    <property type="expression patterns" value="baseline and differential"/>
</dbReference>
<dbReference type="GO" id="GO:0005794">
    <property type="term" value="C:Golgi apparatus"/>
    <property type="evidence" value="ECO:0000314"/>
    <property type="project" value="TAIR"/>
</dbReference>
<dbReference type="GO" id="GO:0000139">
    <property type="term" value="C:Golgi membrane"/>
    <property type="evidence" value="ECO:0007669"/>
    <property type="project" value="UniProtKB-SubCell"/>
</dbReference>
<dbReference type="GO" id="GO:0008378">
    <property type="term" value="F:galactosyltransferase activity"/>
    <property type="evidence" value="ECO:0000315"/>
    <property type="project" value="TAIR"/>
</dbReference>
<dbReference type="GO" id="GO:0006486">
    <property type="term" value="P:protein glycosylation"/>
    <property type="evidence" value="ECO:0007669"/>
    <property type="project" value="InterPro"/>
</dbReference>
<dbReference type="GO" id="GO:0009969">
    <property type="term" value="P:xyloglucan biosynthetic process"/>
    <property type="evidence" value="ECO:0000315"/>
    <property type="project" value="TAIR"/>
</dbReference>
<dbReference type="InterPro" id="IPR004263">
    <property type="entry name" value="Exostosin"/>
</dbReference>
<dbReference type="InterPro" id="IPR040911">
    <property type="entry name" value="Exostosin_GT47"/>
</dbReference>
<dbReference type="PANTHER" id="PTHR11062">
    <property type="entry name" value="EXOSTOSIN HEPARAN SULFATE GLYCOSYLTRANSFERASE -RELATED"/>
    <property type="match status" value="1"/>
</dbReference>
<dbReference type="PANTHER" id="PTHR11062:SF214">
    <property type="entry name" value="XYLOGLUCAN GALACTOSYLTRANSFERASE XLT2"/>
    <property type="match status" value="1"/>
</dbReference>
<dbReference type="Pfam" id="PF03016">
    <property type="entry name" value="Exostosin_GT47"/>
    <property type="match status" value="1"/>
</dbReference>
<name>GT18_ARATH</name>
<gene>
    <name evidence="8" type="primary">XLT2</name>
    <name evidence="7" type="synonym">GT18</name>
    <name evidence="11" type="ordered locus">At5g62220</name>
    <name evidence="12" type="ORF">MMI9.5</name>
</gene>
<organism>
    <name type="scientific">Arabidopsis thaliana</name>
    <name type="common">Mouse-ear cress</name>
    <dbReference type="NCBI Taxonomy" id="3702"/>
    <lineage>
        <taxon>Eukaryota</taxon>
        <taxon>Viridiplantae</taxon>
        <taxon>Streptophyta</taxon>
        <taxon>Embryophyta</taxon>
        <taxon>Tracheophyta</taxon>
        <taxon>Spermatophyta</taxon>
        <taxon>Magnoliopsida</taxon>
        <taxon>eudicotyledons</taxon>
        <taxon>Gunneridae</taxon>
        <taxon>Pentapetalae</taxon>
        <taxon>rosids</taxon>
        <taxon>malvids</taxon>
        <taxon>Brassicales</taxon>
        <taxon>Brassicaceae</taxon>
        <taxon>Camelineae</taxon>
        <taxon>Arabidopsis</taxon>
    </lineage>
</organism>
<comment type="function">
    <text evidence="5 6">Functions in xyloglucan synthesis by adding side chains to the xylosylated glucan backbone. Involved in galactosylating hemicellulose xyloglucan (XyG) at the second position of the XXXG motif to form XLXG (PubMed:22474179). Associates with other xyloglucan-synthesizing enzymes to form multiprotein complexes for xyloglucan synthesis in the Golgi (PubMed:25392066).</text>
</comment>
<comment type="subunit">
    <text evidence="6">Interacts with CSLC4, FUT1, XXT2 and XXT5.</text>
</comment>
<comment type="subcellular location">
    <subcellularLocation>
        <location evidence="5 6">Golgi apparatus membrane</location>
        <topology evidence="10">Single-pass type II membrane protein</topology>
    </subcellularLocation>
</comment>
<comment type="tissue specificity">
    <text evidence="4">Expressed in roots, hypocotyls, cotyledons, leaves, stems and flowers.</text>
</comment>
<comment type="similarity">
    <text evidence="9">Belongs to the glycosyltransferase 47 family.</text>
</comment>
<comment type="sequence caution" evidence="9">
    <conflict type="erroneous gene model prediction">
        <sequence resource="EMBL-CDS" id="BAA97186"/>
    </conflict>
</comment>
<reference key="1">
    <citation type="journal article" date="2014" name="Plant J.">
        <title>The plant glycosyltransferase clone collection for functional genomics.</title>
        <authorList>
            <person name="Lao J."/>
            <person name="Oikawa A."/>
            <person name="Bromley J.R."/>
            <person name="McInerney P."/>
            <person name="Suttangkakul A."/>
            <person name="Smith-Moritz A.M."/>
            <person name="Plahar H."/>
            <person name="Chiu T.-Y."/>
            <person name="Gonzalez Fernandez-Nino S.M.G."/>
            <person name="Ebert B."/>
            <person name="Yang F."/>
            <person name="Christiansen K.M."/>
            <person name="Hansen S.F."/>
            <person name="Stonebloom S."/>
            <person name="Adams P.D."/>
            <person name="Ronald P.C."/>
            <person name="Hillson N.J."/>
            <person name="Hadi M.Z."/>
            <person name="Vega-Sanchez M.E."/>
            <person name="Loque D."/>
            <person name="Scheller H.V."/>
            <person name="Heazlewood J.L."/>
        </authorList>
    </citation>
    <scope>NUCLEOTIDE SEQUENCE [MRNA]</scope>
    <source>
        <strain>cv. Columbia</strain>
    </source>
</reference>
<reference key="2">
    <citation type="journal article" date="2000" name="DNA Res.">
        <title>Structural analysis of Arabidopsis thaliana chromosome 5. X. Sequence features of the regions of 3,076,755 bp covered by sixty P1 and TAC clones.</title>
        <authorList>
            <person name="Sato S."/>
            <person name="Nakamura Y."/>
            <person name="Kaneko T."/>
            <person name="Katoh T."/>
            <person name="Asamizu E."/>
            <person name="Kotani H."/>
            <person name="Tabata S."/>
        </authorList>
    </citation>
    <scope>NUCLEOTIDE SEQUENCE [LARGE SCALE GENOMIC DNA]</scope>
    <source>
        <strain>cv. Columbia</strain>
    </source>
</reference>
<reference key="3">
    <citation type="journal article" date="2017" name="Plant J.">
        <title>Araport11: a complete reannotation of the Arabidopsis thaliana reference genome.</title>
        <authorList>
            <person name="Cheng C.Y."/>
            <person name="Krishnakumar V."/>
            <person name="Chan A.P."/>
            <person name="Thibaud-Nissen F."/>
            <person name="Schobel S."/>
            <person name="Town C.D."/>
        </authorList>
    </citation>
    <scope>GENOME REANNOTATION</scope>
    <source>
        <strain>cv. Columbia</strain>
    </source>
</reference>
<reference key="4">
    <citation type="journal article" date="2004" name="Plant Physiol.">
        <title>Molecular analysis of 10 coding regions from Arabidopsis that are homologous to the MUR3 xyloglucan galactosyltransferase.</title>
        <authorList>
            <person name="Li X."/>
            <person name="Cordero I."/>
            <person name="Caplan J."/>
            <person name="Moelhoej M."/>
            <person name="Reiter W.D."/>
        </authorList>
    </citation>
    <scope>TISSUE SPECIFICITY</scope>
</reference>
<reference key="5">
    <citation type="journal article" date="2012" name="Mol. Plant">
        <title>RNA-Seq analysis of developing nasturtium seeds (Tropaeolum majus): identification and characterization of an additional galactosyltransferase involved in xyloglucan biosynthesis.</title>
        <authorList>
            <person name="Jensen J.K."/>
            <person name="Schultink A."/>
            <person name="Keegstra K."/>
            <person name="Wilkerson C.G."/>
            <person name="Pauly M."/>
        </authorList>
    </citation>
    <scope>FUNCTION</scope>
    <scope>SUBCELLULAR LOCATION</scope>
</reference>
<reference key="6">
    <citation type="journal article" date="2015" name="Plant Cell Physiol.">
        <title>Protein-protein interactions among xyloglucan-synthesizing enzymes and formation of Golgi-localized multiprotein complexes.</title>
        <authorList>
            <person name="Chou Y.H."/>
            <person name="Pogorelko G."/>
            <person name="Young Z.T."/>
            <person name="Zabotina O.A."/>
        </authorList>
    </citation>
    <scope>FUNCTION</scope>
    <scope>INTERACTION WITH CSLC4; FUT1; XXT2 AND XXT5</scope>
    <scope>SUBCELLULAR LOCATION</scope>
</reference>